<keyword id="KW-0150">Chloroplast</keyword>
<keyword id="KW-0472">Membrane</keyword>
<keyword id="KW-0934">Plastid</keyword>
<keyword id="KW-1001">Plastid inner membrane</keyword>
<keyword id="KW-0653">Protein transport</keyword>
<keyword id="KW-0812">Transmembrane</keyword>
<keyword id="KW-1133">Transmembrane helix</keyword>
<keyword id="KW-0813">Transport</keyword>
<sequence>MEKKTNKNKGVAEETKKKVAATTGFIIGQFIRFISIYYAPLYVALGRPHTITILALPYLLIHLFWNTDKSFFAYDSKKLNSIRNLEISSVFLNHFILQLLNSCILPNSTLARLITIYMFRCNNKILFLTSSFFAWFIGQIFMLNSFELVLVWIRKKNYLRSTFRNYLLRNSIFVILFNCLFGSLLFILSIQCLGRIPSPIPTQKLSEVSKIEQRERERLQSEEERDVEKKKPDYKLPDSESEILQKNESETPEFEKHLAALLFDYKRWTRPFRYIKNNRLEQALRNELSQYFFDTYQSDGKNRLSFTHPISLSTFLKMMKLKIPLLLVEKTLYNPLDNGWVSRNKKQMNYRRIYFLNRVNNLDKAVALPRIQFETTRTRLCIHNDETKQEYLPENYDPLLTGPHRGRIKRGLLTINDTLTINDTLSEHLRETIILNRLHALVLLNTNSKNFNQKMYTFEKKPLEISDFSTLSSNLNLTDPDQKTEFLVNPIETHDPNFIRKYIPIEEIRKNAPRWSYKLITELEQISYYKNPPEDHDIRSRKGISVVIFDPTKEAATTNSKTNTTKDTNLETKNKSKSDEKLVVIRYPQQSDFRQGLIKDSMRTQRRKIFLQELFNANVHSPLFFDRLRIVFSFPRLKQIFINLSARHVFGILKSTDKQTKRKRTKKEEKGENKRREQKERLEIGEAWDVFPLAQIIRGLLLLTQSFIRKKIILPSLILGKNIGRILLCQIPEWSEDLQEWNRETHIKCTYNGIPLSQKKFPENWLTEGIQIKILFPFCLKPWHAYKPRTSHYDFCFLTVWGRETEQPFGHPRKTPFFFEPVLQELDKKIVNIKARIFSKVKINLFKRVSKENDFQIRKQIMNESFRQIEEIPSCTNSSLIEKMRNMSDRTRTIKKKIERMTEDKKKVTLELYISTYKRSYRLALSKTICKMVKVLIWKFSYFQKLLNQRVYNDIFLYTIYICRMTTQLFLESTKKFISKSILKNERTKKRININKETKNKIHFLSKLKTSKNCKKNLDLSCDFSNLSQAYVFYKISQTGVLNICKLISVLQHTVISFFIQTQIKDLVHTEGIFKSEVIHQKLQWPKTSQWKNWLRLNSKYDLSPIFWFSLISQKQKWRNRVTKYHRPKEKYLNKWNSHGKYRLSDYKKQNVPKSVSNQKDNSKKCYQYDLLSYKSINYEKKSASVLYRSTPKVTKGQAIYHNDNMSQNYLFAITPNIPGKIKRVDIPYIGKNLDRKYLIWKNIHFSLRKKVDIESWVAVNTSSNKDSTIGNYNYQLIDQIDKKEKELFSLPIHQNTEINRPNSTNSLVDWMGMNEQILNRPITNLELWFFPEFVWLFNVYKTKPWIIPSKILLLNSNLSEIDSQQKSETDSETDSQQKNIAETQKYLEEDSTKSDTKKETELELELFTKKYFLFQLRGDQTFNKSFFKNIQIYCLLLRLRNRKKMTLSCIQRRKLNLRIMPSMTNLLNVPEFLKRTGLVMDPLPLSIKTDGKFLLYKIVGISLVHKSKDQTNKKYRKTRIIRAVENNHLDVLVLENILSSRCRRELRTLICFNYKNWNGVNTTSIFCSKNCNLFWEERNPRQNDKRELIQKFIWPNYRLEDLACMNRYSFDTTNGSRFSILRFHMYLPRKIHG</sequence>
<protein>
    <recommendedName>
        <fullName evidence="1">Protein TIC 214</fullName>
    </recommendedName>
    <alternativeName>
        <fullName evidence="1">Translocon at the inner envelope membrane of chloroplasts 214</fullName>
        <shortName evidence="1">AtTIC214</shortName>
    </alternativeName>
</protein>
<reference key="1">
    <citation type="journal article" date="2007" name="BMC Plant Biol.">
        <title>Complete plastid genome sequences suggest strong selection for retention of photosynthetic genes in the parasitic plant genus Cuscuta.</title>
        <authorList>
            <person name="McNeal J.R."/>
            <person name="Kuehl J.V."/>
            <person name="Boore J.L."/>
            <person name="dePamphilis C.W."/>
        </authorList>
    </citation>
    <scope>NUCLEOTIDE SEQUENCE [LARGE SCALE GENOMIC DNA]</scope>
</reference>
<dbReference type="EMBL" id="EU189132">
    <property type="protein sequence ID" value="ABW83740.1"/>
    <property type="molecule type" value="Genomic_DNA"/>
</dbReference>
<dbReference type="RefSeq" id="YP_001542576.1">
    <property type="nucleotide sequence ID" value="NC_009963.1"/>
</dbReference>
<dbReference type="GeneID" id="5729615"/>
<dbReference type="GO" id="GO:0009706">
    <property type="term" value="C:chloroplast inner membrane"/>
    <property type="evidence" value="ECO:0007669"/>
    <property type="project" value="UniProtKB-SubCell"/>
</dbReference>
<dbReference type="GO" id="GO:0015031">
    <property type="term" value="P:protein transport"/>
    <property type="evidence" value="ECO:0007669"/>
    <property type="project" value="UniProtKB-KW"/>
</dbReference>
<dbReference type="InterPro" id="IPR008896">
    <property type="entry name" value="TIC214"/>
</dbReference>
<dbReference type="PANTHER" id="PTHR33163:SF40">
    <property type="entry name" value="PROTEIN TIC 214"/>
    <property type="match status" value="1"/>
</dbReference>
<dbReference type="PANTHER" id="PTHR33163">
    <property type="entry name" value="PROTEIN TIC 214-RELATED"/>
    <property type="match status" value="1"/>
</dbReference>
<dbReference type="Pfam" id="PF05758">
    <property type="entry name" value="Ycf1"/>
    <property type="match status" value="2"/>
</dbReference>
<organism>
    <name type="scientific">Cuscuta exaltata</name>
    <name type="common">Tall dodder</name>
    <dbReference type="NCBI Taxonomy" id="476139"/>
    <lineage>
        <taxon>Eukaryota</taxon>
        <taxon>Viridiplantae</taxon>
        <taxon>Streptophyta</taxon>
        <taxon>Embryophyta</taxon>
        <taxon>Tracheophyta</taxon>
        <taxon>Spermatophyta</taxon>
        <taxon>Magnoliopsida</taxon>
        <taxon>eudicotyledons</taxon>
        <taxon>Gunneridae</taxon>
        <taxon>Pentapetalae</taxon>
        <taxon>asterids</taxon>
        <taxon>lamiids</taxon>
        <taxon>Solanales</taxon>
        <taxon>Convolvulaceae</taxon>
        <taxon>Cuscuteae</taxon>
        <taxon>Cuscuta</taxon>
        <taxon>Cuscuta subgen. Monogynella</taxon>
    </lineage>
</organism>
<comment type="function">
    <text evidence="1">Involved in protein precursor import into chloroplasts. May be part of an intermediate translocation complex acting as a protein-conducting channel at the inner envelope.</text>
</comment>
<comment type="subunit">
    <text evidence="1">Part of the Tic complex.</text>
</comment>
<comment type="subcellular location">
    <subcellularLocation>
        <location evidence="1">Plastid</location>
        <location evidence="1">Chloroplast inner membrane</location>
        <topology evidence="2">Multi-pass membrane protein</topology>
    </subcellularLocation>
</comment>
<comment type="similarity">
    <text evidence="4">Belongs to the TIC214 family.</text>
</comment>
<comment type="caution">
    <text evidence="4">Young tissue from this organism is photosynthetic and contains some thylakoids, although the photosynthetic activity does not exceed the light compensation point.</text>
</comment>
<evidence type="ECO:0000250" key="1">
    <source>
        <dbReference type="UniProtKB" id="P56785"/>
    </source>
</evidence>
<evidence type="ECO:0000255" key="2"/>
<evidence type="ECO:0000256" key="3">
    <source>
        <dbReference type="SAM" id="MobiDB-lite"/>
    </source>
</evidence>
<evidence type="ECO:0000305" key="4"/>
<geneLocation type="plastid"/>
<gene>
    <name evidence="1" type="primary">TIC214</name>
    <name type="synonym">ycf1</name>
</gene>
<proteinExistence type="inferred from homology"/>
<accession>A8W3G9</accession>
<name>TI214_CUSEX</name>
<feature type="chain" id="PRO_0000326569" description="Protein TIC 214">
    <location>
        <begin position="1"/>
        <end position="1634"/>
    </location>
</feature>
<feature type="transmembrane region" description="Helical" evidence="2">
    <location>
        <begin position="25"/>
        <end position="45"/>
    </location>
</feature>
<feature type="transmembrane region" description="Helical" evidence="2">
    <location>
        <begin position="53"/>
        <end position="73"/>
    </location>
</feature>
<feature type="transmembrane region" description="Helical" evidence="2">
    <location>
        <begin position="94"/>
        <end position="116"/>
    </location>
</feature>
<feature type="transmembrane region" description="Helical" evidence="2">
    <location>
        <begin position="133"/>
        <end position="153"/>
    </location>
</feature>
<feature type="transmembrane region" description="Helical" evidence="2">
    <location>
        <begin position="172"/>
        <end position="192"/>
    </location>
</feature>
<feature type="region of interest" description="Disordered" evidence="3">
    <location>
        <begin position="216"/>
        <end position="242"/>
    </location>
</feature>
<feature type="region of interest" description="Disordered" evidence="3">
    <location>
        <begin position="1365"/>
        <end position="1395"/>
    </location>
</feature>
<feature type="compositionally biased region" description="Basic and acidic residues" evidence="3">
    <location>
        <begin position="1386"/>
        <end position="1395"/>
    </location>
</feature>